<name>THIC_BURO0</name>
<proteinExistence type="inferred from homology"/>
<organism>
    <name type="scientific">Burkholderia orbicola (strain MC0-3)</name>
    <dbReference type="NCBI Taxonomy" id="406425"/>
    <lineage>
        <taxon>Bacteria</taxon>
        <taxon>Pseudomonadati</taxon>
        <taxon>Pseudomonadota</taxon>
        <taxon>Betaproteobacteria</taxon>
        <taxon>Burkholderiales</taxon>
        <taxon>Burkholderiaceae</taxon>
        <taxon>Burkholderia</taxon>
        <taxon>Burkholderia cepacia complex</taxon>
        <taxon>Burkholderia orbicola</taxon>
    </lineage>
</organism>
<keyword id="KW-0004">4Fe-4S</keyword>
<keyword id="KW-0408">Iron</keyword>
<keyword id="KW-0411">Iron-sulfur</keyword>
<keyword id="KW-0456">Lyase</keyword>
<keyword id="KW-0479">Metal-binding</keyword>
<keyword id="KW-0949">S-adenosyl-L-methionine</keyword>
<keyword id="KW-0784">Thiamine biosynthesis</keyword>
<keyword id="KW-0862">Zinc</keyword>
<protein>
    <recommendedName>
        <fullName evidence="1">Phosphomethylpyrimidine synthase</fullName>
        <ecNumber evidence="1">4.1.99.17</ecNumber>
    </recommendedName>
    <alternativeName>
        <fullName evidence="1">Hydroxymethylpyrimidine phosphate synthase</fullName>
        <shortName evidence="1">HMP-P synthase</shortName>
        <shortName evidence="1">HMP-phosphate synthase</shortName>
        <shortName evidence="1">HMPP synthase</shortName>
    </alternativeName>
    <alternativeName>
        <fullName evidence="1">Thiamine biosynthesis protein ThiC</fullName>
    </alternativeName>
</protein>
<reference key="1">
    <citation type="submission" date="2008-02" db="EMBL/GenBank/DDBJ databases">
        <title>Complete sequence of chromosome 1 of Burkholderia cenocepacia MC0-3.</title>
        <authorList>
            <person name="Copeland A."/>
            <person name="Lucas S."/>
            <person name="Lapidus A."/>
            <person name="Barry K."/>
            <person name="Bruce D."/>
            <person name="Goodwin L."/>
            <person name="Glavina del Rio T."/>
            <person name="Dalin E."/>
            <person name="Tice H."/>
            <person name="Pitluck S."/>
            <person name="Chain P."/>
            <person name="Malfatti S."/>
            <person name="Shin M."/>
            <person name="Vergez L."/>
            <person name="Schmutz J."/>
            <person name="Larimer F."/>
            <person name="Land M."/>
            <person name="Hauser L."/>
            <person name="Kyrpides N."/>
            <person name="Mikhailova N."/>
            <person name="Tiedje J."/>
            <person name="Richardson P."/>
        </authorList>
    </citation>
    <scope>NUCLEOTIDE SEQUENCE [LARGE SCALE GENOMIC DNA]</scope>
    <source>
        <strain>MC0-3</strain>
    </source>
</reference>
<evidence type="ECO:0000255" key="1">
    <source>
        <dbReference type="HAMAP-Rule" id="MF_00089"/>
    </source>
</evidence>
<gene>
    <name evidence="1" type="primary">thiC</name>
    <name type="ordered locus">Bcenmc03_1195</name>
</gene>
<dbReference type="EC" id="4.1.99.17" evidence="1"/>
<dbReference type="EMBL" id="CP000958">
    <property type="protein sequence ID" value="ACA90370.1"/>
    <property type="molecule type" value="Genomic_DNA"/>
</dbReference>
<dbReference type="RefSeq" id="WP_012328201.1">
    <property type="nucleotide sequence ID" value="NC_010508.1"/>
</dbReference>
<dbReference type="SMR" id="B1JYX0"/>
<dbReference type="GeneID" id="83047988"/>
<dbReference type="KEGG" id="bcm:Bcenmc03_1195"/>
<dbReference type="HOGENOM" id="CLU_013181_2_1_4"/>
<dbReference type="UniPathway" id="UPA00060"/>
<dbReference type="Proteomes" id="UP000002169">
    <property type="component" value="Chromosome 1"/>
</dbReference>
<dbReference type="GO" id="GO:0005829">
    <property type="term" value="C:cytosol"/>
    <property type="evidence" value="ECO:0007669"/>
    <property type="project" value="TreeGrafter"/>
</dbReference>
<dbReference type="GO" id="GO:0051539">
    <property type="term" value="F:4 iron, 4 sulfur cluster binding"/>
    <property type="evidence" value="ECO:0007669"/>
    <property type="project" value="UniProtKB-KW"/>
</dbReference>
<dbReference type="GO" id="GO:0016830">
    <property type="term" value="F:carbon-carbon lyase activity"/>
    <property type="evidence" value="ECO:0007669"/>
    <property type="project" value="InterPro"/>
</dbReference>
<dbReference type="GO" id="GO:0008270">
    <property type="term" value="F:zinc ion binding"/>
    <property type="evidence" value="ECO:0007669"/>
    <property type="project" value="UniProtKB-UniRule"/>
</dbReference>
<dbReference type="GO" id="GO:0009228">
    <property type="term" value="P:thiamine biosynthetic process"/>
    <property type="evidence" value="ECO:0007669"/>
    <property type="project" value="UniProtKB-KW"/>
</dbReference>
<dbReference type="GO" id="GO:0009229">
    <property type="term" value="P:thiamine diphosphate biosynthetic process"/>
    <property type="evidence" value="ECO:0007669"/>
    <property type="project" value="UniProtKB-UniRule"/>
</dbReference>
<dbReference type="FunFam" id="3.20.20.540:FF:000001">
    <property type="entry name" value="Phosphomethylpyrimidine synthase"/>
    <property type="match status" value="1"/>
</dbReference>
<dbReference type="Gene3D" id="6.10.250.620">
    <property type="match status" value="1"/>
</dbReference>
<dbReference type="Gene3D" id="3.20.20.540">
    <property type="entry name" value="Radical SAM ThiC family, central domain"/>
    <property type="match status" value="1"/>
</dbReference>
<dbReference type="HAMAP" id="MF_00089">
    <property type="entry name" value="ThiC"/>
    <property type="match status" value="1"/>
</dbReference>
<dbReference type="InterPro" id="IPR037509">
    <property type="entry name" value="ThiC"/>
</dbReference>
<dbReference type="InterPro" id="IPR025747">
    <property type="entry name" value="ThiC-associated_dom"/>
</dbReference>
<dbReference type="InterPro" id="IPR038521">
    <property type="entry name" value="ThiC/Bza_core_dom"/>
</dbReference>
<dbReference type="InterPro" id="IPR002817">
    <property type="entry name" value="ThiC/BzaA/B"/>
</dbReference>
<dbReference type="NCBIfam" id="NF006763">
    <property type="entry name" value="PRK09284.1"/>
    <property type="match status" value="1"/>
</dbReference>
<dbReference type="NCBIfam" id="NF009895">
    <property type="entry name" value="PRK13352.1"/>
    <property type="match status" value="1"/>
</dbReference>
<dbReference type="NCBIfam" id="TIGR00190">
    <property type="entry name" value="thiC"/>
    <property type="match status" value="1"/>
</dbReference>
<dbReference type="PANTHER" id="PTHR30557:SF1">
    <property type="entry name" value="PHOSPHOMETHYLPYRIMIDINE SYNTHASE, CHLOROPLASTIC"/>
    <property type="match status" value="1"/>
</dbReference>
<dbReference type="PANTHER" id="PTHR30557">
    <property type="entry name" value="THIAMINE BIOSYNTHESIS PROTEIN THIC"/>
    <property type="match status" value="1"/>
</dbReference>
<dbReference type="Pfam" id="PF13667">
    <property type="entry name" value="ThiC-associated"/>
    <property type="match status" value="1"/>
</dbReference>
<dbReference type="Pfam" id="PF01964">
    <property type="entry name" value="ThiC_Rad_SAM"/>
    <property type="match status" value="1"/>
</dbReference>
<dbReference type="SFLD" id="SFLDF00407">
    <property type="entry name" value="phosphomethylpyrimidine_syntha"/>
    <property type="match status" value="1"/>
</dbReference>
<dbReference type="SFLD" id="SFLDG01114">
    <property type="entry name" value="phosphomethylpyrimidine_syntha"/>
    <property type="match status" value="1"/>
</dbReference>
<dbReference type="SFLD" id="SFLDS00113">
    <property type="entry name" value="Radical_SAM_Phosphomethylpyrim"/>
    <property type="match status" value="1"/>
</dbReference>
<sequence length="643" mass="71026">MNANPKFLSADAHVDAAAVAPLPNSRKVYVTGSQPDIRVPMREITQADTPTGFGGEKNPPIYVYDTSGPYTDPDAKIDIRAGLPALRQGWIEARGDTEVLPGLSSQYGLERAADPATADLRFPGLHRHPRRAQPGKNVTQMHYARQGIITPEMEYIAIRENQRRAEYIESLKSSGPNGAKLAAMMGRQHPGQAFGAAAFGANALAEITPEFVRDEVARGRAIIPANINHPESEPMIIGRNFLVKINANIGNSAVTSSIGEEVDKMTWAIRWGGDTVMDLSTGKHIHETREWIIRNSPVPIGTVPIYQALEKVNGKAEDLTWEIFRDTLIEQAEQGVDYFTIHAGVRLQYVPLTANRMTGIVSRGGSIMAKWCLAHHKESFLYEHFEEICEIMKAYDVSFSLGDGLRPGSIYDANDEAQLGELKTLGELTQIAWKHDVQVMIEGPGHVPMQLIKENMDLQLDWCKEAPFYTLGPLTTDIAPGYDHITSGIGAAMIGWFGTAMLCYVTPKEHLGLPNKDDVKEGIITYKLAAHAADLAKGHPGAQVRDNALSKARFEFRWEDQFNIGLDPDKAREFHDETLPKDSAKVAHFCSMCGPHFCSMKITQDVREFAAQQGVSETEALKKGMEVKAVEFVKTGAEIYHRQ</sequence>
<comment type="function">
    <text evidence="1">Catalyzes the synthesis of the hydroxymethylpyrimidine phosphate (HMP-P) moiety of thiamine from aminoimidazole ribotide (AIR) in a radical S-adenosyl-L-methionine (SAM)-dependent reaction.</text>
</comment>
<comment type="catalytic activity">
    <reaction evidence="1">
        <text>5-amino-1-(5-phospho-beta-D-ribosyl)imidazole + S-adenosyl-L-methionine = 4-amino-2-methyl-5-(phosphooxymethyl)pyrimidine + CO + 5'-deoxyadenosine + formate + L-methionine + 3 H(+)</text>
        <dbReference type="Rhea" id="RHEA:24840"/>
        <dbReference type="ChEBI" id="CHEBI:15378"/>
        <dbReference type="ChEBI" id="CHEBI:15740"/>
        <dbReference type="ChEBI" id="CHEBI:17245"/>
        <dbReference type="ChEBI" id="CHEBI:17319"/>
        <dbReference type="ChEBI" id="CHEBI:57844"/>
        <dbReference type="ChEBI" id="CHEBI:58354"/>
        <dbReference type="ChEBI" id="CHEBI:59789"/>
        <dbReference type="ChEBI" id="CHEBI:137981"/>
        <dbReference type="EC" id="4.1.99.17"/>
    </reaction>
</comment>
<comment type="cofactor">
    <cofactor evidence="1">
        <name>[4Fe-4S] cluster</name>
        <dbReference type="ChEBI" id="CHEBI:49883"/>
    </cofactor>
    <text evidence="1">Binds 1 [4Fe-4S] cluster per subunit. The cluster is coordinated with 3 cysteines and an exchangeable S-adenosyl-L-methionine.</text>
</comment>
<comment type="pathway">
    <text evidence="1">Cofactor biosynthesis; thiamine diphosphate biosynthesis.</text>
</comment>
<comment type="subunit">
    <text evidence="1">Homodimer.</text>
</comment>
<comment type="similarity">
    <text evidence="1">Belongs to the ThiC family.</text>
</comment>
<accession>B1JYX0</accession>
<feature type="chain" id="PRO_1000093192" description="Phosphomethylpyrimidine synthase">
    <location>
        <begin position="1"/>
        <end position="643"/>
    </location>
</feature>
<feature type="binding site" evidence="1">
    <location>
        <position position="248"/>
    </location>
    <ligand>
        <name>substrate</name>
    </ligand>
</feature>
<feature type="binding site" evidence="1">
    <location>
        <position position="277"/>
    </location>
    <ligand>
        <name>substrate</name>
    </ligand>
</feature>
<feature type="binding site" evidence="1">
    <location>
        <position position="306"/>
    </location>
    <ligand>
        <name>substrate</name>
    </ligand>
</feature>
<feature type="binding site" evidence="1">
    <location>
        <position position="342"/>
    </location>
    <ligand>
        <name>substrate</name>
    </ligand>
</feature>
<feature type="binding site" evidence="1">
    <location>
        <begin position="362"/>
        <end position="364"/>
    </location>
    <ligand>
        <name>substrate</name>
    </ligand>
</feature>
<feature type="binding site" evidence="1">
    <location>
        <begin position="403"/>
        <end position="406"/>
    </location>
    <ligand>
        <name>substrate</name>
    </ligand>
</feature>
<feature type="binding site" evidence="1">
    <location>
        <position position="442"/>
    </location>
    <ligand>
        <name>substrate</name>
    </ligand>
</feature>
<feature type="binding site" evidence="1">
    <location>
        <position position="446"/>
    </location>
    <ligand>
        <name>Zn(2+)</name>
        <dbReference type="ChEBI" id="CHEBI:29105"/>
    </ligand>
</feature>
<feature type="binding site" evidence="1">
    <location>
        <position position="469"/>
    </location>
    <ligand>
        <name>substrate</name>
    </ligand>
</feature>
<feature type="binding site" evidence="1">
    <location>
        <position position="510"/>
    </location>
    <ligand>
        <name>Zn(2+)</name>
        <dbReference type="ChEBI" id="CHEBI:29105"/>
    </ligand>
</feature>
<feature type="binding site" evidence="1">
    <location>
        <position position="590"/>
    </location>
    <ligand>
        <name>[4Fe-4S] cluster</name>
        <dbReference type="ChEBI" id="CHEBI:49883"/>
        <note>4Fe-4S-S-AdoMet</note>
    </ligand>
</feature>
<feature type="binding site" evidence="1">
    <location>
        <position position="593"/>
    </location>
    <ligand>
        <name>[4Fe-4S] cluster</name>
        <dbReference type="ChEBI" id="CHEBI:49883"/>
        <note>4Fe-4S-S-AdoMet</note>
    </ligand>
</feature>
<feature type="binding site" evidence="1">
    <location>
        <position position="598"/>
    </location>
    <ligand>
        <name>[4Fe-4S] cluster</name>
        <dbReference type="ChEBI" id="CHEBI:49883"/>
        <note>4Fe-4S-S-AdoMet</note>
    </ligand>
</feature>